<dbReference type="EMBL" id="AP009484">
    <property type="protein sequence ID" value="BAH16724.1"/>
    <property type="molecule type" value="Genomic_DNA"/>
</dbReference>
<dbReference type="RefSeq" id="WP_012655928.1">
    <property type="nucleotide sequence ID" value="NC_011999.1"/>
</dbReference>
<dbReference type="SMR" id="B9E913"/>
<dbReference type="STRING" id="458233.MCCL_0017"/>
<dbReference type="GeneID" id="61130389"/>
<dbReference type="KEGG" id="mcl:MCCL_0017"/>
<dbReference type="eggNOG" id="COG0359">
    <property type="taxonomic scope" value="Bacteria"/>
</dbReference>
<dbReference type="HOGENOM" id="CLU_078938_3_2_9"/>
<dbReference type="OrthoDB" id="9788336at2"/>
<dbReference type="Proteomes" id="UP000001383">
    <property type="component" value="Chromosome"/>
</dbReference>
<dbReference type="GO" id="GO:1990904">
    <property type="term" value="C:ribonucleoprotein complex"/>
    <property type="evidence" value="ECO:0007669"/>
    <property type="project" value="UniProtKB-KW"/>
</dbReference>
<dbReference type="GO" id="GO:0005840">
    <property type="term" value="C:ribosome"/>
    <property type="evidence" value="ECO:0007669"/>
    <property type="project" value="UniProtKB-KW"/>
</dbReference>
<dbReference type="GO" id="GO:0019843">
    <property type="term" value="F:rRNA binding"/>
    <property type="evidence" value="ECO:0007669"/>
    <property type="project" value="UniProtKB-UniRule"/>
</dbReference>
<dbReference type="GO" id="GO:0003735">
    <property type="term" value="F:structural constituent of ribosome"/>
    <property type="evidence" value="ECO:0007669"/>
    <property type="project" value="InterPro"/>
</dbReference>
<dbReference type="GO" id="GO:0006412">
    <property type="term" value="P:translation"/>
    <property type="evidence" value="ECO:0007669"/>
    <property type="project" value="UniProtKB-UniRule"/>
</dbReference>
<dbReference type="FunFam" id="3.10.430.100:FF:000002">
    <property type="entry name" value="50S ribosomal protein L9"/>
    <property type="match status" value="1"/>
</dbReference>
<dbReference type="FunFam" id="3.40.5.10:FF:000002">
    <property type="entry name" value="50S ribosomal protein L9"/>
    <property type="match status" value="1"/>
</dbReference>
<dbReference type="Gene3D" id="3.10.430.100">
    <property type="entry name" value="Ribosomal protein L9, C-terminal domain"/>
    <property type="match status" value="1"/>
</dbReference>
<dbReference type="Gene3D" id="3.40.5.10">
    <property type="entry name" value="Ribosomal protein L9, N-terminal domain"/>
    <property type="match status" value="1"/>
</dbReference>
<dbReference type="HAMAP" id="MF_00503">
    <property type="entry name" value="Ribosomal_bL9"/>
    <property type="match status" value="1"/>
</dbReference>
<dbReference type="InterPro" id="IPR000244">
    <property type="entry name" value="Ribosomal_bL9"/>
</dbReference>
<dbReference type="InterPro" id="IPR009027">
    <property type="entry name" value="Ribosomal_bL9/RNase_H1_N"/>
</dbReference>
<dbReference type="InterPro" id="IPR020594">
    <property type="entry name" value="Ribosomal_bL9_bac/chp"/>
</dbReference>
<dbReference type="InterPro" id="IPR020069">
    <property type="entry name" value="Ribosomal_bL9_C"/>
</dbReference>
<dbReference type="InterPro" id="IPR036791">
    <property type="entry name" value="Ribosomal_bL9_C_sf"/>
</dbReference>
<dbReference type="InterPro" id="IPR020070">
    <property type="entry name" value="Ribosomal_bL9_N"/>
</dbReference>
<dbReference type="InterPro" id="IPR036935">
    <property type="entry name" value="Ribosomal_bL9_N_sf"/>
</dbReference>
<dbReference type="NCBIfam" id="TIGR00158">
    <property type="entry name" value="L9"/>
    <property type="match status" value="1"/>
</dbReference>
<dbReference type="PANTHER" id="PTHR21368">
    <property type="entry name" value="50S RIBOSOMAL PROTEIN L9"/>
    <property type="match status" value="1"/>
</dbReference>
<dbReference type="Pfam" id="PF03948">
    <property type="entry name" value="Ribosomal_L9_C"/>
    <property type="match status" value="1"/>
</dbReference>
<dbReference type="Pfam" id="PF01281">
    <property type="entry name" value="Ribosomal_L9_N"/>
    <property type="match status" value="1"/>
</dbReference>
<dbReference type="SUPFAM" id="SSF55658">
    <property type="entry name" value="L9 N-domain-like"/>
    <property type="match status" value="1"/>
</dbReference>
<dbReference type="SUPFAM" id="SSF55653">
    <property type="entry name" value="Ribosomal protein L9 C-domain"/>
    <property type="match status" value="1"/>
</dbReference>
<dbReference type="PROSITE" id="PS00651">
    <property type="entry name" value="RIBOSOMAL_L9"/>
    <property type="match status" value="1"/>
</dbReference>
<gene>
    <name evidence="1" type="primary">rplI</name>
    <name type="ordered locus">MCCL_0017</name>
</gene>
<accession>B9E913</accession>
<protein>
    <recommendedName>
        <fullName evidence="1">Large ribosomal subunit protein bL9</fullName>
    </recommendedName>
    <alternativeName>
        <fullName evidence="2">50S ribosomal protein L9</fullName>
    </alternativeName>
</protein>
<sequence length="148" mass="16254">MKVIFTQDVKGKGKKGEIKEVPVGYANNFLLKNKLAVEATPGNLKQLEAQKKRVEADKQQELEDAQALKEKLEALEVNVTAKSGEGGRLFGSVSSKQVADALNKQHGIKIDKRKMDLHDGIRSLGYTNVPVKLHNKVIGTLKVHVTEA</sequence>
<name>RL9_MACCJ</name>
<comment type="function">
    <text evidence="1">Binds to the 23S rRNA.</text>
</comment>
<comment type="similarity">
    <text evidence="1">Belongs to the bacterial ribosomal protein bL9 family.</text>
</comment>
<feature type="chain" id="PRO_1000196251" description="Large ribosomal subunit protein bL9">
    <location>
        <begin position="1"/>
        <end position="148"/>
    </location>
</feature>
<proteinExistence type="inferred from homology"/>
<organism>
    <name type="scientific">Macrococcus caseolyticus (strain JCSC5402)</name>
    <name type="common">Macrococcoides caseolyticum</name>
    <dbReference type="NCBI Taxonomy" id="458233"/>
    <lineage>
        <taxon>Bacteria</taxon>
        <taxon>Bacillati</taxon>
        <taxon>Bacillota</taxon>
        <taxon>Bacilli</taxon>
        <taxon>Bacillales</taxon>
        <taxon>Staphylococcaceae</taxon>
        <taxon>Macrococcoides</taxon>
    </lineage>
</organism>
<evidence type="ECO:0000255" key="1">
    <source>
        <dbReference type="HAMAP-Rule" id="MF_00503"/>
    </source>
</evidence>
<evidence type="ECO:0000305" key="2"/>
<reference key="1">
    <citation type="journal article" date="2009" name="J. Bacteriol.">
        <title>Complete genome sequence of Macrococcus caseolyticus strain JCSCS5402, reflecting the ancestral genome of the human-pathogenic staphylococci.</title>
        <authorList>
            <person name="Baba T."/>
            <person name="Kuwahara-Arai K."/>
            <person name="Uchiyama I."/>
            <person name="Takeuchi F."/>
            <person name="Ito T."/>
            <person name="Hiramatsu K."/>
        </authorList>
    </citation>
    <scope>NUCLEOTIDE SEQUENCE [LARGE SCALE GENOMIC DNA]</scope>
    <source>
        <strain>JCSC5402</strain>
    </source>
</reference>
<keyword id="KW-1185">Reference proteome</keyword>
<keyword id="KW-0687">Ribonucleoprotein</keyword>
<keyword id="KW-0689">Ribosomal protein</keyword>
<keyword id="KW-0694">RNA-binding</keyword>
<keyword id="KW-0699">rRNA-binding</keyword>